<comment type="function">
    <text evidence="1">Can catalyze the hydrolysis of ATP in the presence of single-stranded DNA, the ATP-dependent uptake of single-stranded DNA by duplex DNA, and the ATP-dependent hybridization of homologous single-stranded DNAs. It interacts with LexA causing its activation and leading to its autocatalytic cleavage.</text>
</comment>
<comment type="subcellular location">
    <subcellularLocation>
        <location evidence="1">Cytoplasm</location>
    </subcellularLocation>
</comment>
<comment type="similarity">
    <text evidence="1">Belongs to the RecA family.</text>
</comment>
<protein>
    <recommendedName>
        <fullName evidence="1">Protein RecA</fullName>
    </recommendedName>
    <alternativeName>
        <fullName evidence="1">Recombinase A</fullName>
    </alternativeName>
</protein>
<reference key="1">
    <citation type="journal article" date="2001" name="Lancet">
        <title>Whole genome sequencing of meticillin-resistant Staphylococcus aureus.</title>
        <authorList>
            <person name="Kuroda M."/>
            <person name="Ohta T."/>
            <person name="Uchiyama I."/>
            <person name="Baba T."/>
            <person name="Yuzawa H."/>
            <person name="Kobayashi I."/>
            <person name="Cui L."/>
            <person name="Oguchi A."/>
            <person name="Aoki K."/>
            <person name="Nagai Y."/>
            <person name="Lian J.-Q."/>
            <person name="Ito T."/>
            <person name="Kanamori M."/>
            <person name="Matsumaru H."/>
            <person name="Maruyama A."/>
            <person name="Murakami H."/>
            <person name="Hosoyama A."/>
            <person name="Mizutani-Ui Y."/>
            <person name="Takahashi N.K."/>
            <person name="Sawano T."/>
            <person name="Inoue R."/>
            <person name="Kaito C."/>
            <person name="Sekimizu K."/>
            <person name="Hirakawa H."/>
            <person name="Kuhara S."/>
            <person name="Goto S."/>
            <person name="Yabuzaki J."/>
            <person name="Kanehisa M."/>
            <person name="Yamashita A."/>
            <person name="Oshima K."/>
            <person name="Furuya K."/>
            <person name="Yoshino C."/>
            <person name="Shiba T."/>
            <person name="Hattori M."/>
            <person name="Ogasawara N."/>
            <person name="Hayashi H."/>
            <person name="Hiramatsu K."/>
        </authorList>
    </citation>
    <scope>NUCLEOTIDE SEQUENCE [LARGE SCALE GENOMIC DNA]</scope>
    <source>
        <strain>N315</strain>
    </source>
</reference>
<reference key="2">
    <citation type="submission" date="2007-10" db="UniProtKB">
        <title>Shotgun proteomic analysis of total and membrane protein extracts of S. aureus strain N315.</title>
        <authorList>
            <person name="Vaezzadeh A.R."/>
            <person name="Deshusses J."/>
            <person name="Lescuyer P."/>
            <person name="Hochstrasser D.F."/>
        </authorList>
    </citation>
    <scope>IDENTIFICATION BY MASS SPECTROMETRY [LARGE SCALE ANALYSIS]</scope>
    <source>
        <strain>N315</strain>
    </source>
</reference>
<accession>P68844</accession>
<accession>Q02350</accession>
<name>RECA_STAAN</name>
<feature type="chain" id="PRO_0000122840" description="Protein RecA">
    <location>
        <begin position="1"/>
        <end position="347"/>
    </location>
</feature>
<feature type="region of interest" description="Disordered" evidence="2">
    <location>
        <begin position="325"/>
        <end position="347"/>
    </location>
</feature>
<feature type="compositionally biased region" description="Basic and acidic residues" evidence="2">
    <location>
        <begin position="338"/>
        <end position="347"/>
    </location>
</feature>
<feature type="binding site" evidence="1">
    <location>
        <begin position="65"/>
        <end position="72"/>
    </location>
    <ligand>
        <name>ATP</name>
        <dbReference type="ChEBI" id="CHEBI:30616"/>
    </ligand>
</feature>
<dbReference type="EMBL" id="BA000018">
    <property type="protein sequence ID" value="BAB42380.1"/>
    <property type="molecule type" value="Genomic_DNA"/>
</dbReference>
<dbReference type="PIR" id="H89902">
    <property type="entry name" value="H89902"/>
</dbReference>
<dbReference type="RefSeq" id="WP_000368166.1">
    <property type="nucleotide sequence ID" value="NC_002745.2"/>
</dbReference>
<dbReference type="SMR" id="P68844"/>
<dbReference type="EnsemblBacteria" id="BAB42380">
    <property type="protein sequence ID" value="BAB42380"/>
    <property type="gene ID" value="BAB42380"/>
</dbReference>
<dbReference type="KEGG" id="sau:SA1128"/>
<dbReference type="HOGENOM" id="CLU_040469_1_2_9"/>
<dbReference type="GO" id="GO:0005829">
    <property type="term" value="C:cytosol"/>
    <property type="evidence" value="ECO:0007669"/>
    <property type="project" value="TreeGrafter"/>
</dbReference>
<dbReference type="GO" id="GO:0005524">
    <property type="term" value="F:ATP binding"/>
    <property type="evidence" value="ECO:0007669"/>
    <property type="project" value="UniProtKB-UniRule"/>
</dbReference>
<dbReference type="GO" id="GO:0016887">
    <property type="term" value="F:ATP hydrolysis activity"/>
    <property type="evidence" value="ECO:0007669"/>
    <property type="project" value="InterPro"/>
</dbReference>
<dbReference type="GO" id="GO:0140664">
    <property type="term" value="F:ATP-dependent DNA damage sensor activity"/>
    <property type="evidence" value="ECO:0007669"/>
    <property type="project" value="InterPro"/>
</dbReference>
<dbReference type="GO" id="GO:0003684">
    <property type="term" value="F:damaged DNA binding"/>
    <property type="evidence" value="ECO:0007669"/>
    <property type="project" value="UniProtKB-UniRule"/>
</dbReference>
<dbReference type="GO" id="GO:0003697">
    <property type="term" value="F:single-stranded DNA binding"/>
    <property type="evidence" value="ECO:0007669"/>
    <property type="project" value="UniProtKB-UniRule"/>
</dbReference>
<dbReference type="GO" id="GO:0006310">
    <property type="term" value="P:DNA recombination"/>
    <property type="evidence" value="ECO:0007669"/>
    <property type="project" value="UniProtKB-UniRule"/>
</dbReference>
<dbReference type="GO" id="GO:0006281">
    <property type="term" value="P:DNA repair"/>
    <property type="evidence" value="ECO:0007669"/>
    <property type="project" value="UniProtKB-UniRule"/>
</dbReference>
<dbReference type="GO" id="GO:0009432">
    <property type="term" value="P:SOS response"/>
    <property type="evidence" value="ECO:0007669"/>
    <property type="project" value="UniProtKB-UniRule"/>
</dbReference>
<dbReference type="CDD" id="cd00983">
    <property type="entry name" value="RecA"/>
    <property type="match status" value="1"/>
</dbReference>
<dbReference type="FunFam" id="3.40.50.300:FF:000087">
    <property type="entry name" value="Recombinase RecA"/>
    <property type="match status" value="1"/>
</dbReference>
<dbReference type="Gene3D" id="3.40.50.300">
    <property type="entry name" value="P-loop containing nucleotide triphosphate hydrolases"/>
    <property type="match status" value="1"/>
</dbReference>
<dbReference type="HAMAP" id="MF_00268">
    <property type="entry name" value="RecA"/>
    <property type="match status" value="1"/>
</dbReference>
<dbReference type="InterPro" id="IPR003593">
    <property type="entry name" value="AAA+_ATPase"/>
</dbReference>
<dbReference type="InterPro" id="IPR013765">
    <property type="entry name" value="DNA_recomb/repair_RecA"/>
</dbReference>
<dbReference type="InterPro" id="IPR020584">
    <property type="entry name" value="DNA_recomb/repair_RecA_CS"/>
</dbReference>
<dbReference type="InterPro" id="IPR027417">
    <property type="entry name" value="P-loop_NTPase"/>
</dbReference>
<dbReference type="InterPro" id="IPR049261">
    <property type="entry name" value="RecA-like_C"/>
</dbReference>
<dbReference type="InterPro" id="IPR049428">
    <property type="entry name" value="RecA-like_N"/>
</dbReference>
<dbReference type="InterPro" id="IPR020588">
    <property type="entry name" value="RecA_ATP-bd"/>
</dbReference>
<dbReference type="InterPro" id="IPR023400">
    <property type="entry name" value="RecA_C_sf"/>
</dbReference>
<dbReference type="InterPro" id="IPR020587">
    <property type="entry name" value="RecA_monomer-monomer_interface"/>
</dbReference>
<dbReference type="NCBIfam" id="TIGR02012">
    <property type="entry name" value="tigrfam_recA"/>
    <property type="match status" value="1"/>
</dbReference>
<dbReference type="PANTHER" id="PTHR45900:SF1">
    <property type="entry name" value="MITOCHONDRIAL DNA REPAIR PROTEIN RECA HOMOLOG-RELATED"/>
    <property type="match status" value="1"/>
</dbReference>
<dbReference type="PANTHER" id="PTHR45900">
    <property type="entry name" value="RECA"/>
    <property type="match status" value="1"/>
</dbReference>
<dbReference type="Pfam" id="PF00154">
    <property type="entry name" value="RecA"/>
    <property type="match status" value="1"/>
</dbReference>
<dbReference type="Pfam" id="PF21096">
    <property type="entry name" value="RecA_C"/>
    <property type="match status" value="1"/>
</dbReference>
<dbReference type="PRINTS" id="PR00142">
    <property type="entry name" value="RECA"/>
</dbReference>
<dbReference type="SMART" id="SM00382">
    <property type="entry name" value="AAA"/>
    <property type="match status" value="1"/>
</dbReference>
<dbReference type="SUPFAM" id="SSF52540">
    <property type="entry name" value="P-loop containing nucleoside triphosphate hydrolases"/>
    <property type="match status" value="1"/>
</dbReference>
<dbReference type="SUPFAM" id="SSF54752">
    <property type="entry name" value="RecA protein, C-terminal domain"/>
    <property type="match status" value="1"/>
</dbReference>
<dbReference type="PROSITE" id="PS00321">
    <property type="entry name" value="RECA_1"/>
    <property type="match status" value="1"/>
</dbReference>
<dbReference type="PROSITE" id="PS50162">
    <property type="entry name" value="RECA_2"/>
    <property type="match status" value="1"/>
</dbReference>
<dbReference type="PROSITE" id="PS50163">
    <property type="entry name" value="RECA_3"/>
    <property type="match status" value="1"/>
</dbReference>
<keyword id="KW-0067">ATP-binding</keyword>
<keyword id="KW-0963">Cytoplasm</keyword>
<keyword id="KW-0227">DNA damage</keyword>
<keyword id="KW-0233">DNA recombination</keyword>
<keyword id="KW-0234">DNA repair</keyword>
<keyword id="KW-0238">DNA-binding</keyword>
<keyword id="KW-0547">Nucleotide-binding</keyword>
<keyword id="KW-0742">SOS response</keyword>
<sequence>MDNDRQKALDTVIKNMEKSFGKGAVMKLGDNIGRRVSTTSTGSVTLDNALGVGGYPKGRIIEIYGPESSGKTTVALHAIAEVQSNGGVAAFIDAEHALDPEYAQALGVDIDNLYLSQPDHGEQGLEIAEAFVRSGAVDIVVVDSVAALTPKAEIEGEMGDTHVGLQARLMSQALRKLSGAISKSNTTAIFINQIREKVGVMFGNPETTPGGRALKFYSSVRLEVRRAEQLKQGQEIVGNRTKIKVVKNKVAPPFRVAEVDIMYGQGISKEGELIDLGVENDIVDKSGAWYSYNGERMGQGKENVKMYLKENPQIKEEIDRKLREKLGISDGDVEETEDAPKSLFDEE</sequence>
<evidence type="ECO:0000255" key="1">
    <source>
        <dbReference type="HAMAP-Rule" id="MF_00268"/>
    </source>
</evidence>
<evidence type="ECO:0000256" key="2">
    <source>
        <dbReference type="SAM" id="MobiDB-lite"/>
    </source>
</evidence>
<proteinExistence type="evidence at protein level"/>
<gene>
    <name evidence="1" type="primary">recA</name>
    <name type="ordered locus">SA1128</name>
</gene>
<organism>
    <name type="scientific">Staphylococcus aureus (strain N315)</name>
    <dbReference type="NCBI Taxonomy" id="158879"/>
    <lineage>
        <taxon>Bacteria</taxon>
        <taxon>Bacillati</taxon>
        <taxon>Bacillota</taxon>
        <taxon>Bacilli</taxon>
        <taxon>Bacillales</taxon>
        <taxon>Staphylococcaceae</taxon>
        <taxon>Staphylococcus</taxon>
    </lineage>
</organism>